<dbReference type="EC" id="6.1.1.11" evidence="1"/>
<dbReference type="EMBL" id="CP001581">
    <property type="protein sequence ID" value="ACO84594.1"/>
    <property type="molecule type" value="Genomic_DNA"/>
</dbReference>
<dbReference type="RefSeq" id="WP_012704307.1">
    <property type="nucleotide sequence ID" value="NC_012563.1"/>
</dbReference>
<dbReference type="SMR" id="C1FPI7"/>
<dbReference type="KEGG" id="cby:CLM_0022"/>
<dbReference type="eggNOG" id="COG0172">
    <property type="taxonomic scope" value="Bacteria"/>
</dbReference>
<dbReference type="HOGENOM" id="CLU_023797_1_1_9"/>
<dbReference type="UniPathway" id="UPA00906">
    <property type="reaction ID" value="UER00895"/>
</dbReference>
<dbReference type="Proteomes" id="UP000001374">
    <property type="component" value="Chromosome"/>
</dbReference>
<dbReference type="GO" id="GO:0005737">
    <property type="term" value="C:cytoplasm"/>
    <property type="evidence" value="ECO:0007669"/>
    <property type="project" value="UniProtKB-SubCell"/>
</dbReference>
<dbReference type="GO" id="GO:0005524">
    <property type="term" value="F:ATP binding"/>
    <property type="evidence" value="ECO:0007669"/>
    <property type="project" value="UniProtKB-UniRule"/>
</dbReference>
<dbReference type="GO" id="GO:0140096">
    <property type="term" value="F:catalytic activity, acting on a protein"/>
    <property type="evidence" value="ECO:0007669"/>
    <property type="project" value="UniProtKB-ARBA"/>
</dbReference>
<dbReference type="GO" id="GO:0004828">
    <property type="term" value="F:serine-tRNA ligase activity"/>
    <property type="evidence" value="ECO:0007669"/>
    <property type="project" value="UniProtKB-UniRule"/>
</dbReference>
<dbReference type="GO" id="GO:0016740">
    <property type="term" value="F:transferase activity"/>
    <property type="evidence" value="ECO:0007669"/>
    <property type="project" value="UniProtKB-ARBA"/>
</dbReference>
<dbReference type="GO" id="GO:0016260">
    <property type="term" value="P:selenocysteine biosynthetic process"/>
    <property type="evidence" value="ECO:0007669"/>
    <property type="project" value="UniProtKB-UniRule"/>
</dbReference>
<dbReference type="GO" id="GO:0006434">
    <property type="term" value="P:seryl-tRNA aminoacylation"/>
    <property type="evidence" value="ECO:0007669"/>
    <property type="project" value="UniProtKB-UniRule"/>
</dbReference>
<dbReference type="CDD" id="cd00770">
    <property type="entry name" value="SerRS_core"/>
    <property type="match status" value="1"/>
</dbReference>
<dbReference type="Gene3D" id="3.30.930.10">
    <property type="entry name" value="Bira Bifunctional Protein, Domain 2"/>
    <property type="match status" value="1"/>
</dbReference>
<dbReference type="Gene3D" id="1.10.287.40">
    <property type="entry name" value="Serine-tRNA synthetase, tRNA binding domain"/>
    <property type="match status" value="1"/>
</dbReference>
<dbReference type="HAMAP" id="MF_00176">
    <property type="entry name" value="Ser_tRNA_synth_type1"/>
    <property type="match status" value="1"/>
</dbReference>
<dbReference type="InterPro" id="IPR002314">
    <property type="entry name" value="aa-tRNA-synt_IIb"/>
</dbReference>
<dbReference type="InterPro" id="IPR006195">
    <property type="entry name" value="aa-tRNA-synth_II"/>
</dbReference>
<dbReference type="InterPro" id="IPR045864">
    <property type="entry name" value="aa-tRNA-synth_II/BPL/LPL"/>
</dbReference>
<dbReference type="InterPro" id="IPR002317">
    <property type="entry name" value="Ser-tRNA-ligase_type_1"/>
</dbReference>
<dbReference type="InterPro" id="IPR015866">
    <property type="entry name" value="Ser-tRNA-synth_1_N"/>
</dbReference>
<dbReference type="InterPro" id="IPR042103">
    <property type="entry name" value="SerRS_1_N_sf"/>
</dbReference>
<dbReference type="InterPro" id="IPR033729">
    <property type="entry name" value="SerRS_core"/>
</dbReference>
<dbReference type="InterPro" id="IPR010978">
    <property type="entry name" value="tRNA-bd_arm"/>
</dbReference>
<dbReference type="NCBIfam" id="TIGR00414">
    <property type="entry name" value="serS"/>
    <property type="match status" value="1"/>
</dbReference>
<dbReference type="PANTHER" id="PTHR43697:SF1">
    <property type="entry name" value="SERINE--TRNA LIGASE"/>
    <property type="match status" value="1"/>
</dbReference>
<dbReference type="PANTHER" id="PTHR43697">
    <property type="entry name" value="SERYL-TRNA SYNTHETASE"/>
    <property type="match status" value="1"/>
</dbReference>
<dbReference type="Pfam" id="PF02403">
    <property type="entry name" value="Seryl_tRNA_N"/>
    <property type="match status" value="1"/>
</dbReference>
<dbReference type="Pfam" id="PF00587">
    <property type="entry name" value="tRNA-synt_2b"/>
    <property type="match status" value="1"/>
</dbReference>
<dbReference type="PIRSF" id="PIRSF001529">
    <property type="entry name" value="Ser-tRNA-synth_IIa"/>
    <property type="match status" value="1"/>
</dbReference>
<dbReference type="PRINTS" id="PR00981">
    <property type="entry name" value="TRNASYNTHSER"/>
</dbReference>
<dbReference type="SUPFAM" id="SSF55681">
    <property type="entry name" value="Class II aaRS and biotin synthetases"/>
    <property type="match status" value="1"/>
</dbReference>
<dbReference type="SUPFAM" id="SSF46589">
    <property type="entry name" value="tRNA-binding arm"/>
    <property type="match status" value="1"/>
</dbReference>
<dbReference type="PROSITE" id="PS50862">
    <property type="entry name" value="AA_TRNA_LIGASE_II"/>
    <property type="match status" value="1"/>
</dbReference>
<name>SYS_CLOBJ</name>
<accession>C1FPI7</accession>
<gene>
    <name evidence="1" type="primary">serS</name>
    <name type="ordered locus">CLM_0022</name>
</gene>
<comment type="function">
    <text evidence="1">Catalyzes the attachment of serine to tRNA(Ser). Is also able to aminoacylate tRNA(Sec) with serine, to form the misacylated tRNA L-seryl-tRNA(Sec), which will be further converted into selenocysteinyl-tRNA(Sec).</text>
</comment>
<comment type="catalytic activity">
    <reaction evidence="1">
        <text>tRNA(Ser) + L-serine + ATP = L-seryl-tRNA(Ser) + AMP + diphosphate + H(+)</text>
        <dbReference type="Rhea" id="RHEA:12292"/>
        <dbReference type="Rhea" id="RHEA-COMP:9669"/>
        <dbReference type="Rhea" id="RHEA-COMP:9703"/>
        <dbReference type="ChEBI" id="CHEBI:15378"/>
        <dbReference type="ChEBI" id="CHEBI:30616"/>
        <dbReference type="ChEBI" id="CHEBI:33019"/>
        <dbReference type="ChEBI" id="CHEBI:33384"/>
        <dbReference type="ChEBI" id="CHEBI:78442"/>
        <dbReference type="ChEBI" id="CHEBI:78533"/>
        <dbReference type="ChEBI" id="CHEBI:456215"/>
        <dbReference type="EC" id="6.1.1.11"/>
    </reaction>
</comment>
<comment type="catalytic activity">
    <reaction evidence="1">
        <text>tRNA(Sec) + L-serine + ATP = L-seryl-tRNA(Sec) + AMP + diphosphate + H(+)</text>
        <dbReference type="Rhea" id="RHEA:42580"/>
        <dbReference type="Rhea" id="RHEA-COMP:9742"/>
        <dbReference type="Rhea" id="RHEA-COMP:10128"/>
        <dbReference type="ChEBI" id="CHEBI:15378"/>
        <dbReference type="ChEBI" id="CHEBI:30616"/>
        <dbReference type="ChEBI" id="CHEBI:33019"/>
        <dbReference type="ChEBI" id="CHEBI:33384"/>
        <dbReference type="ChEBI" id="CHEBI:78442"/>
        <dbReference type="ChEBI" id="CHEBI:78533"/>
        <dbReference type="ChEBI" id="CHEBI:456215"/>
        <dbReference type="EC" id="6.1.1.11"/>
    </reaction>
</comment>
<comment type="pathway">
    <text evidence="1">Aminoacyl-tRNA biosynthesis; selenocysteinyl-tRNA(Sec) biosynthesis; L-seryl-tRNA(Sec) from L-serine and tRNA(Sec): step 1/1.</text>
</comment>
<comment type="subunit">
    <text evidence="1">Homodimer. The tRNA molecule binds across the dimer.</text>
</comment>
<comment type="subcellular location">
    <subcellularLocation>
        <location evidence="1">Cytoplasm</location>
    </subcellularLocation>
</comment>
<comment type="domain">
    <text evidence="1">Consists of two distinct domains, a catalytic core and a N-terminal extension that is involved in tRNA binding.</text>
</comment>
<comment type="similarity">
    <text evidence="1">Belongs to the class-II aminoacyl-tRNA synthetase family. Type-1 seryl-tRNA synthetase subfamily.</text>
</comment>
<reference key="1">
    <citation type="submission" date="2008-10" db="EMBL/GenBank/DDBJ databases">
        <title>Genome sequence of Clostridium botulinum A2 Kyoto.</title>
        <authorList>
            <person name="Shrivastava S."/>
            <person name="Brinkac L.M."/>
            <person name="Brown J.L."/>
            <person name="Bruce D."/>
            <person name="Detter C.C."/>
            <person name="Johnson E.A."/>
            <person name="Munk C.A."/>
            <person name="Smith L.A."/>
            <person name="Smith T.J."/>
            <person name="Sutton G."/>
            <person name="Brettin T.S."/>
        </authorList>
    </citation>
    <scope>NUCLEOTIDE SEQUENCE [LARGE SCALE GENOMIC DNA]</scope>
    <source>
        <strain>Kyoto / Type A2</strain>
    </source>
</reference>
<proteinExistence type="inferred from homology"/>
<protein>
    <recommendedName>
        <fullName evidence="1">Serine--tRNA ligase</fullName>
        <ecNumber evidence="1">6.1.1.11</ecNumber>
    </recommendedName>
    <alternativeName>
        <fullName evidence="1">Seryl-tRNA synthetase</fullName>
        <shortName evidence="1">SerRS</shortName>
    </alternativeName>
    <alternativeName>
        <fullName evidence="1">Seryl-tRNA(Ser/Sec) synthetase</fullName>
    </alternativeName>
</protein>
<organism>
    <name type="scientific">Clostridium botulinum (strain Kyoto / Type A2)</name>
    <dbReference type="NCBI Taxonomy" id="536232"/>
    <lineage>
        <taxon>Bacteria</taxon>
        <taxon>Bacillati</taxon>
        <taxon>Bacillota</taxon>
        <taxon>Clostridia</taxon>
        <taxon>Eubacteriales</taxon>
        <taxon>Clostridiaceae</taxon>
        <taxon>Clostridium</taxon>
    </lineage>
</organism>
<sequence>MLDLKRIRNNSNEIKEALNNRGEKFDVTVIDEVLKLDEERRNILVKVEVLKSKRNKVSSEVPKLKKEGKDVSNIVAEMKNLSEEIKGFDVTLAKIDEKIQYIMLRIPNIPNPQVPDGETDEDNIEIRNWLEPTKFDFEPKAHWDIGTNLNILDFERAGKVTGSRFTFYKGLGARLERAVISYFLDTHTEKHDYTEILPPYMVNRTSMIGTGQLPKFEEDAFKISEDDYFLIPTAEVPVTNLYRDEILKGDELPLKHVAYSACFRSEAGSAGRDTRGLVRQHQFNKVELVKFTKPEQSYEELEKLTNDAETVLKELGIPYRVVRICKGDLGFTAALKYDLEVWMPSYNRYVEISSCSNFEDFQARRANIRYKEDAKAKPQYVHTLNGSGVAIGRTVAAILENYQSEDGSVTIPEVLRPYMGGREVIK</sequence>
<evidence type="ECO:0000255" key="1">
    <source>
        <dbReference type="HAMAP-Rule" id="MF_00176"/>
    </source>
</evidence>
<feature type="chain" id="PRO_1000123882" description="Serine--tRNA ligase">
    <location>
        <begin position="1"/>
        <end position="426"/>
    </location>
</feature>
<feature type="binding site" evidence="1">
    <location>
        <begin position="233"/>
        <end position="235"/>
    </location>
    <ligand>
        <name>L-serine</name>
        <dbReference type="ChEBI" id="CHEBI:33384"/>
    </ligand>
</feature>
<feature type="binding site" evidence="1">
    <location>
        <begin position="264"/>
        <end position="266"/>
    </location>
    <ligand>
        <name>ATP</name>
        <dbReference type="ChEBI" id="CHEBI:30616"/>
    </ligand>
</feature>
<feature type="binding site" evidence="1">
    <location>
        <position position="287"/>
    </location>
    <ligand>
        <name>L-serine</name>
        <dbReference type="ChEBI" id="CHEBI:33384"/>
    </ligand>
</feature>
<feature type="binding site" evidence="1">
    <location>
        <begin position="351"/>
        <end position="354"/>
    </location>
    <ligand>
        <name>ATP</name>
        <dbReference type="ChEBI" id="CHEBI:30616"/>
    </ligand>
</feature>
<feature type="binding site" evidence="1">
    <location>
        <position position="387"/>
    </location>
    <ligand>
        <name>L-serine</name>
        <dbReference type="ChEBI" id="CHEBI:33384"/>
    </ligand>
</feature>
<keyword id="KW-0030">Aminoacyl-tRNA synthetase</keyword>
<keyword id="KW-0067">ATP-binding</keyword>
<keyword id="KW-0963">Cytoplasm</keyword>
<keyword id="KW-0436">Ligase</keyword>
<keyword id="KW-0547">Nucleotide-binding</keyword>
<keyword id="KW-0648">Protein biosynthesis</keyword>